<protein>
    <recommendedName>
        <fullName evidence="1">Large ribosomal subunit protein uL13</fullName>
    </recommendedName>
    <alternativeName>
        <fullName evidence="2">50S ribosomal protein L13</fullName>
    </alternativeName>
</protein>
<feature type="chain" id="PRO_1000055399" description="Large ribosomal subunit protein uL13">
    <location>
        <begin position="1"/>
        <end position="147"/>
    </location>
</feature>
<organism>
    <name type="scientific">Lactobacillus delbrueckii subsp. bulgaricus (strain ATCC 11842 / DSM 20081 / BCRC 10696 / JCM 1002 / NBRC 13953 / NCIMB 11778 / NCTC 12712 / WDCM 00102 / Lb 14)</name>
    <dbReference type="NCBI Taxonomy" id="390333"/>
    <lineage>
        <taxon>Bacteria</taxon>
        <taxon>Bacillati</taxon>
        <taxon>Bacillota</taxon>
        <taxon>Bacilli</taxon>
        <taxon>Lactobacillales</taxon>
        <taxon>Lactobacillaceae</taxon>
        <taxon>Lactobacillus</taxon>
    </lineage>
</organism>
<reference key="1">
    <citation type="journal article" date="2006" name="Proc. Natl. Acad. Sci. U.S.A.">
        <title>The complete genome sequence of Lactobacillus bulgaricus reveals extensive and ongoing reductive evolution.</title>
        <authorList>
            <person name="van de Guchte M."/>
            <person name="Penaud S."/>
            <person name="Grimaldi C."/>
            <person name="Barbe V."/>
            <person name="Bryson K."/>
            <person name="Nicolas P."/>
            <person name="Robert C."/>
            <person name="Oztas S."/>
            <person name="Mangenot S."/>
            <person name="Couloux A."/>
            <person name="Loux V."/>
            <person name="Dervyn R."/>
            <person name="Bossy R."/>
            <person name="Bolotin A."/>
            <person name="Batto J.-M."/>
            <person name="Walunas T."/>
            <person name="Gibrat J.-F."/>
            <person name="Bessieres P."/>
            <person name="Weissenbach J."/>
            <person name="Ehrlich S.D."/>
            <person name="Maguin E."/>
        </authorList>
    </citation>
    <scope>NUCLEOTIDE SEQUENCE [LARGE SCALE GENOMIC DNA]</scope>
    <source>
        <strain>ATCC 11842 / DSM 20081 / BCRC 10696 / JCM 1002 / NBRC 13953 / NCIMB 11778 / NCTC 12712 / WDCM 00102 / Lb 14</strain>
    </source>
</reference>
<name>RL13_LACDA</name>
<accession>Q1GBI6</accession>
<comment type="function">
    <text evidence="1">This protein is one of the early assembly proteins of the 50S ribosomal subunit, although it is not seen to bind rRNA by itself. It is important during the early stages of 50S assembly.</text>
</comment>
<comment type="subunit">
    <text evidence="1">Part of the 50S ribosomal subunit.</text>
</comment>
<comment type="similarity">
    <text evidence="1">Belongs to the universal ribosomal protein uL13 family.</text>
</comment>
<proteinExistence type="inferred from homology"/>
<gene>
    <name evidence="1" type="primary">rplM</name>
    <name type="ordered locus">Ldb0428</name>
</gene>
<dbReference type="EMBL" id="CR954253">
    <property type="protein sequence ID" value="CAI97263.1"/>
    <property type="molecule type" value="Genomic_DNA"/>
</dbReference>
<dbReference type="RefSeq" id="WP_003613334.1">
    <property type="nucleotide sequence ID" value="NZ_JQAV01000001.1"/>
</dbReference>
<dbReference type="SMR" id="Q1GBI6"/>
<dbReference type="STRING" id="390333.Ldb0428"/>
<dbReference type="KEGG" id="ldb:Ldb0428"/>
<dbReference type="PATRIC" id="fig|390333.13.peg.364"/>
<dbReference type="eggNOG" id="COG0102">
    <property type="taxonomic scope" value="Bacteria"/>
</dbReference>
<dbReference type="HOGENOM" id="CLU_082184_2_2_9"/>
<dbReference type="BioCyc" id="LDEL390333:LDB_RS01825-MONOMER"/>
<dbReference type="Proteomes" id="UP000001259">
    <property type="component" value="Chromosome"/>
</dbReference>
<dbReference type="GO" id="GO:0022625">
    <property type="term" value="C:cytosolic large ribosomal subunit"/>
    <property type="evidence" value="ECO:0007669"/>
    <property type="project" value="TreeGrafter"/>
</dbReference>
<dbReference type="GO" id="GO:0003729">
    <property type="term" value="F:mRNA binding"/>
    <property type="evidence" value="ECO:0007669"/>
    <property type="project" value="TreeGrafter"/>
</dbReference>
<dbReference type="GO" id="GO:0003735">
    <property type="term" value="F:structural constituent of ribosome"/>
    <property type="evidence" value="ECO:0007669"/>
    <property type="project" value="InterPro"/>
</dbReference>
<dbReference type="GO" id="GO:0017148">
    <property type="term" value="P:negative regulation of translation"/>
    <property type="evidence" value="ECO:0007669"/>
    <property type="project" value="TreeGrafter"/>
</dbReference>
<dbReference type="GO" id="GO:0006412">
    <property type="term" value="P:translation"/>
    <property type="evidence" value="ECO:0007669"/>
    <property type="project" value="UniProtKB-UniRule"/>
</dbReference>
<dbReference type="CDD" id="cd00392">
    <property type="entry name" value="Ribosomal_L13"/>
    <property type="match status" value="1"/>
</dbReference>
<dbReference type="FunFam" id="3.90.1180.10:FF:000001">
    <property type="entry name" value="50S ribosomal protein L13"/>
    <property type="match status" value="1"/>
</dbReference>
<dbReference type="Gene3D" id="3.90.1180.10">
    <property type="entry name" value="Ribosomal protein L13"/>
    <property type="match status" value="1"/>
</dbReference>
<dbReference type="HAMAP" id="MF_01366">
    <property type="entry name" value="Ribosomal_uL13"/>
    <property type="match status" value="1"/>
</dbReference>
<dbReference type="InterPro" id="IPR005822">
    <property type="entry name" value="Ribosomal_uL13"/>
</dbReference>
<dbReference type="InterPro" id="IPR005823">
    <property type="entry name" value="Ribosomal_uL13_bac-type"/>
</dbReference>
<dbReference type="InterPro" id="IPR023563">
    <property type="entry name" value="Ribosomal_uL13_CS"/>
</dbReference>
<dbReference type="InterPro" id="IPR036899">
    <property type="entry name" value="Ribosomal_uL13_sf"/>
</dbReference>
<dbReference type="NCBIfam" id="TIGR01066">
    <property type="entry name" value="rplM_bact"/>
    <property type="match status" value="1"/>
</dbReference>
<dbReference type="PANTHER" id="PTHR11545:SF2">
    <property type="entry name" value="LARGE RIBOSOMAL SUBUNIT PROTEIN UL13M"/>
    <property type="match status" value="1"/>
</dbReference>
<dbReference type="PANTHER" id="PTHR11545">
    <property type="entry name" value="RIBOSOMAL PROTEIN L13"/>
    <property type="match status" value="1"/>
</dbReference>
<dbReference type="Pfam" id="PF00572">
    <property type="entry name" value="Ribosomal_L13"/>
    <property type="match status" value="1"/>
</dbReference>
<dbReference type="PIRSF" id="PIRSF002181">
    <property type="entry name" value="Ribosomal_L13"/>
    <property type="match status" value="1"/>
</dbReference>
<dbReference type="SUPFAM" id="SSF52161">
    <property type="entry name" value="Ribosomal protein L13"/>
    <property type="match status" value="1"/>
</dbReference>
<dbReference type="PROSITE" id="PS00783">
    <property type="entry name" value="RIBOSOMAL_L13"/>
    <property type="match status" value="1"/>
</dbReference>
<keyword id="KW-1185">Reference proteome</keyword>
<keyword id="KW-0687">Ribonucleoprotein</keyword>
<keyword id="KW-0689">Ribosomal protein</keyword>
<sequence>MRTTPLAKTSEIERKWYLIDATDVSLGRLSTAVATILRGKNKPQFTPNVDTGDNVIIVNASKLKLTGKKATDKIYYHHSEYRGGLKSVSAGELLAKNPVKLVELSVKGMLPKNTLGHQEFLKMHVYAGEEHKHEAQKPEKLDINNLI</sequence>
<evidence type="ECO:0000255" key="1">
    <source>
        <dbReference type="HAMAP-Rule" id="MF_01366"/>
    </source>
</evidence>
<evidence type="ECO:0000305" key="2"/>